<comment type="function">
    <text evidence="1">Catalyzes the transfer of an acyl group from acyl-phosphate (acyl-PO(4)) to glycerol-3-phosphate (G3P) to form lysophosphatidic acid (LPA). This enzyme utilizes acyl-phosphate as fatty acyl donor, but not acyl-CoA or acyl-ACP.</text>
</comment>
<comment type="catalytic activity">
    <reaction evidence="1">
        <text>an acyl phosphate + sn-glycerol 3-phosphate = a 1-acyl-sn-glycero-3-phosphate + phosphate</text>
        <dbReference type="Rhea" id="RHEA:34075"/>
        <dbReference type="ChEBI" id="CHEBI:43474"/>
        <dbReference type="ChEBI" id="CHEBI:57597"/>
        <dbReference type="ChEBI" id="CHEBI:57970"/>
        <dbReference type="ChEBI" id="CHEBI:59918"/>
        <dbReference type="EC" id="2.3.1.275"/>
    </reaction>
</comment>
<comment type="pathway">
    <text evidence="1">Lipid metabolism; phospholipid metabolism.</text>
</comment>
<comment type="subunit">
    <text evidence="1">Probably interacts with PlsX.</text>
</comment>
<comment type="subcellular location">
    <subcellularLocation>
        <location evidence="1">Cell inner membrane</location>
        <topology evidence="1">Multi-pass membrane protein</topology>
    </subcellularLocation>
</comment>
<comment type="similarity">
    <text evidence="1">Belongs to the PlsY family.</text>
</comment>
<evidence type="ECO:0000255" key="1">
    <source>
        <dbReference type="HAMAP-Rule" id="MF_01043"/>
    </source>
</evidence>
<keyword id="KW-0997">Cell inner membrane</keyword>
<keyword id="KW-1003">Cell membrane</keyword>
<keyword id="KW-0444">Lipid biosynthesis</keyword>
<keyword id="KW-0443">Lipid metabolism</keyword>
<keyword id="KW-0472">Membrane</keyword>
<keyword id="KW-0594">Phospholipid biosynthesis</keyword>
<keyword id="KW-1208">Phospholipid metabolism</keyword>
<keyword id="KW-1185">Reference proteome</keyword>
<keyword id="KW-0808">Transferase</keyword>
<keyword id="KW-0812">Transmembrane</keyword>
<keyword id="KW-1133">Transmembrane helix</keyword>
<feature type="chain" id="PRO_1000213407" description="Glycerol-3-phosphate acyltransferase">
    <location>
        <begin position="1"/>
        <end position="203"/>
    </location>
</feature>
<feature type="transmembrane region" description="Helical" evidence="1">
    <location>
        <begin position="10"/>
        <end position="30"/>
    </location>
</feature>
<feature type="transmembrane region" description="Helical" evidence="1">
    <location>
        <begin position="59"/>
        <end position="79"/>
    </location>
</feature>
<feature type="transmembrane region" description="Helical" evidence="1">
    <location>
        <begin position="87"/>
        <end position="107"/>
    </location>
</feature>
<feature type="transmembrane region" description="Helical" evidence="1">
    <location>
        <begin position="116"/>
        <end position="136"/>
    </location>
</feature>
<feature type="transmembrane region" description="Helical" evidence="1">
    <location>
        <begin position="168"/>
        <end position="188"/>
    </location>
</feature>
<dbReference type="EC" id="2.3.1.275" evidence="1"/>
<dbReference type="EMBL" id="CP000830">
    <property type="protein sequence ID" value="ABV94828.1"/>
    <property type="molecule type" value="Genomic_DNA"/>
</dbReference>
<dbReference type="RefSeq" id="WP_012179756.1">
    <property type="nucleotide sequence ID" value="NC_009952.1"/>
</dbReference>
<dbReference type="SMR" id="A8LL79"/>
<dbReference type="STRING" id="398580.Dshi_3095"/>
<dbReference type="KEGG" id="dsh:Dshi_3095"/>
<dbReference type="eggNOG" id="COG0344">
    <property type="taxonomic scope" value="Bacteria"/>
</dbReference>
<dbReference type="HOGENOM" id="CLU_081254_1_0_5"/>
<dbReference type="OrthoDB" id="9777124at2"/>
<dbReference type="UniPathway" id="UPA00085"/>
<dbReference type="Proteomes" id="UP000006833">
    <property type="component" value="Chromosome"/>
</dbReference>
<dbReference type="GO" id="GO:0005886">
    <property type="term" value="C:plasma membrane"/>
    <property type="evidence" value="ECO:0007669"/>
    <property type="project" value="UniProtKB-SubCell"/>
</dbReference>
<dbReference type="GO" id="GO:0043772">
    <property type="term" value="F:acyl-phosphate glycerol-3-phosphate acyltransferase activity"/>
    <property type="evidence" value="ECO:0007669"/>
    <property type="project" value="UniProtKB-UniRule"/>
</dbReference>
<dbReference type="GO" id="GO:0008654">
    <property type="term" value="P:phospholipid biosynthetic process"/>
    <property type="evidence" value="ECO:0007669"/>
    <property type="project" value="UniProtKB-UniRule"/>
</dbReference>
<dbReference type="HAMAP" id="MF_01043">
    <property type="entry name" value="PlsY"/>
    <property type="match status" value="1"/>
</dbReference>
<dbReference type="InterPro" id="IPR003811">
    <property type="entry name" value="G3P_acylTferase_PlsY"/>
</dbReference>
<dbReference type="NCBIfam" id="TIGR00023">
    <property type="entry name" value="glycerol-3-phosphate 1-O-acyltransferase PlsY"/>
    <property type="match status" value="1"/>
</dbReference>
<dbReference type="PANTHER" id="PTHR30309:SF0">
    <property type="entry name" value="GLYCEROL-3-PHOSPHATE ACYLTRANSFERASE-RELATED"/>
    <property type="match status" value="1"/>
</dbReference>
<dbReference type="PANTHER" id="PTHR30309">
    <property type="entry name" value="INNER MEMBRANE PROTEIN YGIH"/>
    <property type="match status" value="1"/>
</dbReference>
<dbReference type="Pfam" id="PF02660">
    <property type="entry name" value="G3P_acyltransf"/>
    <property type="match status" value="1"/>
</dbReference>
<dbReference type="SMART" id="SM01207">
    <property type="entry name" value="G3P_acyltransf"/>
    <property type="match status" value="1"/>
</dbReference>
<protein>
    <recommendedName>
        <fullName evidence="1">Glycerol-3-phosphate acyltransferase</fullName>
    </recommendedName>
    <alternativeName>
        <fullName evidence="1">Acyl-PO4 G3P acyltransferase</fullName>
    </alternativeName>
    <alternativeName>
        <fullName evidence="1">Acyl-phosphate--glycerol-3-phosphate acyltransferase</fullName>
    </alternativeName>
    <alternativeName>
        <fullName evidence="1">G3P acyltransferase</fullName>
        <shortName evidence="1">GPAT</shortName>
        <ecNumber evidence="1">2.3.1.275</ecNumber>
    </alternativeName>
    <alternativeName>
        <fullName evidence="1">Lysophosphatidic acid synthase</fullName>
        <shortName evidence="1">LPA synthase</shortName>
    </alternativeName>
</protein>
<organism>
    <name type="scientific">Dinoroseobacter shibae (strain DSM 16493 / NCIMB 14021 / DFL 12)</name>
    <dbReference type="NCBI Taxonomy" id="398580"/>
    <lineage>
        <taxon>Bacteria</taxon>
        <taxon>Pseudomonadati</taxon>
        <taxon>Pseudomonadota</taxon>
        <taxon>Alphaproteobacteria</taxon>
        <taxon>Rhodobacterales</taxon>
        <taxon>Roseobacteraceae</taxon>
        <taxon>Dinoroseobacter</taxon>
    </lineage>
</organism>
<gene>
    <name evidence="1" type="primary">plsY</name>
    <name type="ordered locus">Dshi_3095</name>
</gene>
<sequence length="203" mass="21178">MPELTTAPGLLALVGLAAYLLGAIPFGLLIAKLFGLGNLREIGSGNIGATNVLRTGSKPAAAATLILDAGKGAFAVILARVLVGEDAAQIAGAAAFLGHCFPVYLKFNGGKGVATFFGTVIALSWPLGLAAGAIWLATAYTFRISSLSALMAALMTPIFAWGFGQRELVVLSLFLGFLIWIRHRENIIRLLSGTEPRIGAKKR</sequence>
<accession>A8LL79</accession>
<reference key="1">
    <citation type="journal article" date="2010" name="ISME J.">
        <title>The complete genome sequence of the algal symbiont Dinoroseobacter shibae: a hitchhiker's guide to life in the sea.</title>
        <authorList>
            <person name="Wagner-Dobler I."/>
            <person name="Ballhausen B."/>
            <person name="Berger M."/>
            <person name="Brinkhoff T."/>
            <person name="Buchholz I."/>
            <person name="Bunk B."/>
            <person name="Cypionka H."/>
            <person name="Daniel R."/>
            <person name="Drepper T."/>
            <person name="Gerdts G."/>
            <person name="Hahnke S."/>
            <person name="Han C."/>
            <person name="Jahn D."/>
            <person name="Kalhoefer D."/>
            <person name="Kiss H."/>
            <person name="Klenk H.P."/>
            <person name="Kyrpides N."/>
            <person name="Liebl W."/>
            <person name="Liesegang H."/>
            <person name="Meincke L."/>
            <person name="Pati A."/>
            <person name="Petersen J."/>
            <person name="Piekarski T."/>
            <person name="Pommerenke C."/>
            <person name="Pradella S."/>
            <person name="Pukall R."/>
            <person name="Rabus R."/>
            <person name="Stackebrandt E."/>
            <person name="Thole S."/>
            <person name="Thompson L."/>
            <person name="Tielen P."/>
            <person name="Tomasch J."/>
            <person name="von Jan M."/>
            <person name="Wanphrut N."/>
            <person name="Wichels A."/>
            <person name="Zech H."/>
            <person name="Simon M."/>
        </authorList>
    </citation>
    <scope>NUCLEOTIDE SEQUENCE [LARGE SCALE GENOMIC DNA]</scope>
    <source>
        <strain>DSM 16493 / NCIMB 14021 / DFL 12</strain>
    </source>
</reference>
<name>PLSY_DINSH</name>
<proteinExistence type="inferred from homology"/>